<protein>
    <recommendedName>
        <fullName>FP protein</fullName>
    </recommendedName>
    <alternativeName>
        <fullName>25 kDa protein</fullName>
    </alternativeName>
</protein>
<sequence>MDQFEQLINVSLLKSLIKTQIDENVSDNIKSMSEKLKRLEYDNLTDSVEIYGIHDSRLNNKKIRNYYLKKICALLDLNFKHVIESSFDKNHIVAKLCDATRAKEWQTKSRERRLKNFNLNINYDGPVKIFVAATAEQKLLLKKTRDALLPFYKYISICKNGVMVRRDEKSRVFIVKNEQNIEYLKANKYYAFHSDSVDNFESENDSEKMLQNLI</sequence>
<gene>
    <name type="primary">FP</name>
</gene>
<dbReference type="EMBL" id="M29140">
    <property type="protein sequence ID" value="AAA46680.1"/>
    <property type="molecule type" value="Genomic_DNA"/>
</dbReference>
<dbReference type="InterPro" id="IPR004941">
    <property type="entry name" value="FP_N"/>
</dbReference>
<dbReference type="Pfam" id="PF03258">
    <property type="entry name" value="Baculo_FP"/>
    <property type="match status" value="1"/>
</dbReference>
<dbReference type="Pfam" id="PF25298">
    <property type="entry name" value="Baculo_FP_2nd"/>
    <property type="match status" value="1"/>
</dbReference>
<organism>
    <name type="scientific">Galleria mellonella nuclear polyhedrosis virus</name>
    <name type="common">GmNPV</name>
    <dbReference type="NCBI Taxonomy" id="307468"/>
    <lineage>
        <taxon>Viruses</taxon>
        <taxon>Viruses incertae sedis</taxon>
        <taxon>Naldaviricetes</taxon>
        <taxon>Lefavirales</taxon>
        <taxon>Baculoviridae</taxon>
        <taxon>Alphabaculovirus</taxon>
        <taxon>Alphabaculovirus aucalifornicae</taxon>
    </lineage>
</organism>
<reference key="1">
    <citation type="journal article" date="1989" name="Gene">
        <title>Transposon mutagenesis of baculoviruses: analysis of TFP3 lepidopteran transposon insertions at the FP locus of nuclear polyhedrosis viruses.</title>
        <authorList>
            <person name="Wang H.-H."/>
            <person name="Fraser M.J. Jr."/>
            <person name="Cary L.C."/>
        </authorList>
    </citation>
    <scope>NUCLEOTIDE SEQUENCE [GENOMIC DNA]</scope>
</reference>
<name>FP_NPVGM</name>
<accession>P69038</accession>
<accession>P18350</accession>
<comment type="miscellaneous">
    <text>This protein is missing from baculovirus FP (few polyhedra) mutants.</text>
</comment>
<proteinExistence type="predicted"/>
<organismHost>
    <name type="scientific">Lepidoptera</name>
    <name type="common">butterflies and moths</name>
    <dbReference type="NCBI Taxonomy" id="7088"/>
</organismHost>
<feature type="chain" id="PRO_0000132871" description="FP protein">
    <location>
        <begin position="1"/>
        <end position="214"/>
    </location>
</feature>